<dbReference type="EC" id="3.4.11.9" evidence="1"/>
<dbReference type="EMBL" id="MF503680">
    <property type="protein sequence ID" value="AXC25272.1"/>
    <property type="molecule type" value="mRNA"/>
</dbReference>
<dbReference type="SMR" id="A0A2Z5GDY5"/>
<dbReference type="OrthoDB" id="9995434at2759"/>
<dbReference type="GO" id="GO:0005737">
    <property type="term" value="C:cytoplasm"/>
    <property type="evidence" value="ECO:0000314"/>
    <property type="project" value="UniProtKB"/>
</dbReference>
<dbReference type="GO" id="GO:0005783">
    <property type="term" value="C:endoplasmic reticulum"/>
    <property type="evidence" value="ECO:0007669"/>
    <property type="project" value="UniProtKB-KW"/>
</dbReference>
<dbReference type="GO" id="GO:0019897">
    <property type="term" value="C:extrinsic component of plasma membrane"/>
    <property type="evidence" value="ECO:0000314"/>
    <property type="project" value="UniProtKB"/>
</dbReference>
<dbReference type="GO" id="GO:0005634">
    <property type="term" value="C:nucleus"/>
    <property type="evidence" value="ECO:0000314"/>
    <property type="project" value="UniProtKB"/>
</dbReference>
<dbReference type="GO" id="GO:0046872">
    <property type="term" value="F:metal ion binding"/>
    <property type="evidence" value="ECO:0007669"/>
    <property type="project" value="UniProtKB-KW"/>
</dbReference>
<dbReference type="GO" id="GO:0070006">
    <property type="term" value="F:metalloaminopeptidase activity"/>
    <property type="evidence" value="ECO:0007669"/>
    <property type="project" value="InterPro"/>
</dbReference>
<dbReference type="GO" id="GO:0009877">
    <property type="term" value="P:nodulation"/>
    <property type="evidence" value="ECO:0000315"/>
    <property type="project" value="UniProtKB"/>
</dbReference>
<dbReference type="GO" id="GO:0006508">
    <property type="term" value="P:proteolysis"/>
    <property type="evidence" value="ECO:0007669"/>
    <property type="project" value="UniProtKB-KW"/>
</dbReference>
<dbReference type="GO" id="GO:0009609">
    <property type="term" value="P:response to symbiotic bacterium"/>
    <property type="evidence" value="ECO:0000270"/>
    <property type="project" value="UniProtKB"/>
</dbReference>
<dbReference type="CDD" id="cd01085">
    <property type="entry name" value="APP"/>
    <property type="match status" value="1"/>
</dbReference>
<dbReference type="FunFam" id="3.90.230.10:FF:000007">
    <property type="entry name" value="Xaa-Pro aminopeptidase P"/>
    <property type="match status" value="1"/>
</dbReference>
<dbReference type="FunFam" id="3.40.350.10:FF:000003">
    <property type="entry name" value="Xaa-pro aminopeptidase P"/>
    <property type="match status" value="1"/>
</dbReference>
<dbReference type="Gene3D" id="3.90.230.10">
    <property type="entry name" value="Creatinase/methionine aminopeptidase superfamily"/>
    <property type="match status" value="1"/>
</dbReference>
<dbReference type="Gene3D" id="3.40.350.10">
    <property type="entry name" value="Creatinase/prolidase N-terminal domain"/>
    <property type="match status" value="2"/>
</dbReference>
<dbReference type="InterPro" id="IPR029149">
    <property type="entry name" value="Creatin/AminoP/Spt16_N"/>
</dbReference>
<dbReference type="InterPro" id="IPR036005">
    <property type="entry name" value="Creatinase/aminopeptidase-like"/>
</dbReference>
<dbReference type="InterPro" id="IPR000587">
    <property type="entry name" value="Creatinase_N"/>
</dbReference>
<dbReference type="InterPro" id="IPR000994">
    <property type="entry name" value="Pept_M24"/>
</dbReference>
<dbReference type="InterPro" id="IPR033740">
    <property type="entry name" value="Pept_M24B"/>
</dbReference>
<dbReference type="InterPro" id="IPR032416">
    <property type="entry name" value="Peptidase_M24_C"/>
</dbReference>
<dbReference type="InterPro" id="IPR001131">
    <property type="entry name" value="Peptidase_M24B_aminopep-P_CS"/>
</dbReference>
<dbReference type="InterPro" id="IPR050422">
    <property type="entry name" value="X-Pro_aminopeptidase_P"/>
</dbReference>
<dbReference type="PANTHER" id="PTHR43763:SF12">
    <property type="entry name" value="AMINOPEPTIDASE P1"/>
    <property type="match status" value="1"/>
</dbReference>
<dbReference type="PANTHER" id="PTHR43763">
    <property type="entry name" value="XAA-PRO AMINOPEPTIDASE 1"/>
    <property type="match status" value="1"/>
</dbReference>
<dbReference type="Pfam" id="PF01321">
    <property type="entry name" value="Creatinase_N"/>
    <property type="match status" value="1"/>
</dbReference>
<dbReference type="Pfam" id="PF16189">
    <property type="entry name" value="Creatinase_N_2"/>
    <property type="match status" value="1"/>
</dbReference>
<dbReference type="Pfam" id="PF00557">
    <property type="entry name" value="Peptidase_M24"/>
    <property type="match status" value="1"/>
</dbReference>
<dbReference type="Pfam" id="PF16188">
    <property type="entry name" value="Peptidase_M24_C"/>
    <property type="match status" value="1"/>
</dbReference>
<dbReference type="SUPFAM" id="SSF55920">
    <property type="entry name" value="Creatinase/aminopeptidase"/>
    <property type="match status" value="1"/>
</dbReference>
<dbReference type="SUPFAM" id="SSF53092">
    <property type="entry name" value="Creatinase/prolidase N-terminal domain"/>
    <property type="match status" value="1"/>
</dbReference>
<dbReference type="PROSITE" id="PS00491">
    <property type="entry name" value="PROLINE_PEPTIDASE"/>
    <property type="match status" value="1"/>
</dbReference>
<feature type="chain" id="PRO_0000460404" description="Aminopeptidase P1">
    <location>
        <begin position="1"/>
        <end position="658"/>
    </location>
</feature>
<feature type="binding site" evidence="2">
    <location>
        <position position="69"/>
    </location>
    <ligand>
        <name>a peptide</name>
        <dbReference type="ChEBI" id="CHEBI:60466"/>
    </ligand>
</feature>
<feature type="binding site" evidence="2">
    <location>
        <position position="436"/>
    </location>
    <ligand>
        <name>a peptide</name>
        <dbReference type="ChEBI" id="CHEBI:60466"/>
    </ligand>
</feature>
<feature type="binding site" evidence="3">
    <location>
        <position position="456"/>
    </location>
    <ligand>
        <name>Mn(2+)</name>
        <dbReference type="ChEBI" id="CHEBI:29035"/>
        <label>1</label>
    </ligand>
</feature>
<feature type="binding site" evidence="3">
    <location>
        <position position="467"/>
    </location>
    <ligand>
        <name>Mn(2+)</name>
        <dbReference type="ChEBI" id="CHEBI:29035"/>
        <label>1</label>
    </ligand>
</feature>
<feature type="binding site" evidence="3">
    <location>
        <position position="467"/>
    </location>
    <ligand>
        <name>Mn(2+)</name>
        <dbReference type="ChEBI" id="CHEBI:29035"/>
        <label>2</label>
    </ligand>
</feature>
<feature type="binding site" evidence="2">
    <location>
        <position position="530"/>
    </location>
    <ligand>
        <name>a peptide</name>
        <dbReference type="ChEBI" id="CHEBI:60466"/>
    </ligand>
</feature>
<feature type="binding site" evidence="3">
    <location>
        <position position="530"/>
    </location>
    <ligand>
        <name>Mn(2+)</name>
        <dbReference type="ChEBI" id="CHEBI:29035"/>
        <label>2</label>
    </ligand>
</feature>
<feature type="binding site" evidence="2">
    <location>
        <position position="539"/>
    </location>
    <ligand>
        <name>a peptide</name>
        <dbReference type="ChEBI" id="CHEBI:60466"/>
    </ligand>
</feature>
<feature type="binding site" evidence="2">
    <location>
        <position position="563"/>
    </location>
    <ligand>
        <name>a peptide</name>
        <dbReference type="ChEBI" id="CHEBI:60466"/>
    </ligand>
</feature>
<feature type="binding site" evidence="3">
    <location>
        <position position="563"/>
    </location>
    <ligand>
        <name>Mn(2+)</name>
        <dbReference type="ChEBI" id="CHEBI:29035"/>
        <label>2</label>
    </ligand>
</feature>
<feature type="binding site" evidence="3">
    <location>
        <position position="577"/>
    </location>
    <ligand>
        <name>Mn(2+)</name>
        <dbReference type="ChEBI" id="CHEBI:29035"/>
        <label>1</label>
    </ligand>
</feature>
<feature type="binding site" evidence="3">
    <location>
        <position position="577"/>
    </location>
    <ligand>
        <name>Mn(2+)</name>
        <dbReference type="ChEBI" id="CHEBI:29035"/>
        <label>2</label>
    </ligand>
</feature>
<accession>A0A2Z5GDY5</accession>
<organism>
    <name type="scientific">Lotus japonicus</name>
    <name type="common">Lotus corniculatus var. japonicus</name>
    <dbReference type="NCBI Taxonomy" id="34305"/>
    <lineage>
        <taxon>Eukaryota</taxon>
        <taxon>Viridiplantae</taxon>
        <taxon>Streptophyta</taxon>
        <taxon>Embryophyta</taxon>
        <taxon>Tracheophyta</taxon>
        <taxon>Spermatophyta</taxon>
        <taxon>Magnoliopsida</taxon>
        <taxon>eudicotyledons</taxon>
        <taxon>Gunneridae</taxon>
        <taxon>Pentapetalae</taxon>
        <taxon>rosids</taxon>
        <taxon>fabids</taxon>
        <taxon>Fabales</taxon>
        <taxon>Fabaceae</taxon>
        <taxon>Papilionoideae</taxon>
        <taxon>50 kb inversion clade</taxon>
        <taxon>NPAAA clade</taxon>
        <taxon>Hologalegina</taxon>
        <taxon>robinioid clade</taxon>
        <taxon>Loteae</taxon>
        <taxon>Lotus</taxon>
    </lineage>
</organism>
<name>AMPP1_LOTJA</name>
<proteinExistence type="evidence at protein level"/>
<protein>
    <recommendedName>
        <fullName evidence="6">Aminopeptidase P1</fullName>
        <shortName evidence="6">LjAPP1</shortName>
        <ecNumber evidence="1">3.4.11.9</ecNumber>
    </recommendedName>
</protein>
<comment type="function">
    <text evidence="1 4 5">Catalyzes the removal of a penultimate prolyl residue from the N-termini of peptides, such as Arg-Pro-Pro (By similarity). Aminopeptidase that binds to the auxin transport inhibitor N-1-naphthylphthalamic acid (NPA) (By similarity). May play a negative role in the regulation of PIN auxin transport proteins (By similarity). Involved in the coordination of the symbiotic nodule developmental program; prevents the formation of root nodules by regulating the expression of the nuclear transcription factor Y subunit (NF-YA1), a key nodulin (Ref.1).</text>
</comment>
<comment type="catalytic activity">
    <reaction evidence="1">
        <text>Release of any N-terminal amino acid, including proline, that is linked to proline, even from a dipeptide or tripeptide.</text>
        <dbReference type="EC" id="3.4.11.9"/>
    </reaction>
</comment>
<comment type="cofactor">
    <cofactor evidence="1">
        <name>Mn(2+)</name>
        <dbReference type="ChEBI" id="CHEBI:29035"/>
    </cofactor>
    <cofactor evidence="1">
        <name>Zn(2+)</name>
        <dbReference type="ChEBI" id="CHEBI:29105"/>
    </cofactor>
    <text evidence="1">Binds 2 manganese or zinc ions per subunit.</text>
</comment>
<comment type="subunit">
    <text evidence="1 5">Homodimer (By similarity). Interacts with N-1-naphthylphthalamic acid (NPA) (By similarity). Interacts with NBCL/BOP2/COCH around the plasma membrane and in the nucleus; this interaction disturbs its regulation of the nuclear transcription factor Y subunit (NF-YA1) (Ref.1).</text>
</comment>
<comment type="subcellular location">
    <subcellularLocation>
        <location evidence="5">Nucleus</location>
    </subcellularLocation>
    <subcellularLocation>
        <location evidence="5">Cytoplasm</location>
    </subcellularLocation>
    <subcellularLocation>
        <location evidence="5">Cell membrane</location>
        <topology evidence="5">Peripheral membrane protein</topology>
    </subcellularLocation>
    <subcellularLocation>
        <location evidence="1">Microsome membrane</location>
        <topology evidence="1">Peripheral membrane protein</topology>
    </subcellularLocation>
</comment>
<comment type="tissue specificity">
    <text evidence="5">Expressed at similar levels in shoot apical meristems (SAM), root meristems (RM), root apical meristems (RAM), roots and leaves and, to a slightly lesser degree, in root nodules.</text>
</comment>
<comment type="induction">
    <text evidence="5">Induced rapidly after rhizobial inoculation with M.loti, peaking within a day and remaining at moderate levels during root nodule development.</text>
</comment>
<comment type="disruption phenotype">
    <text evidence="5">Increased root nodules number in the presence of M.loti probably due to a slight up-regulation of nodulins expression (e.g. NF-YA1).</text>
</comment>
<comment type="similarity">
    <text evidence="7">Belongs to the peptidase M24B family.</text>
</comment>
<reference key="1">
    <citation type="journal article" date="2018" name="Plant Growth Regul.">
        <title>LjCOCH interplays with LjAPP1 to maintain the nodule development in Lotus japonicus.</title>
        <authorList>
            <person name="Liu Y.-C."/>
            <person name="Lei Y.-W."/>
            <person name="Liu W."/>
            <person name="Weng L."/>
            <person name="Lei M.-J."/>
            <person name="Hu X.-H."/>
            <person name="Dong Z."/>
            <person name="Luo D."/>
            <person name="Yang J."/>
        </authorList>
    </citation>
    <scope>NUCLEOTIDE SEQUENCE [MRNA]</scope>
    <scope>FUNCTION</scope>
    <scope>DISRUPTION PHENOTYPE</scope>
    <scope>INTERACTION WITH NBCL/BOP2/COCH</scope>
    <scope>SUBCELLULAR LOCATION</scope>
    <scope>INDUCTION BY MESORHIZOBIUM LOTI</scope>
    <scope>TISSUE SPECIFICITY</scope>
    <source>
        <strain>cv. Gifu B-129</strain>
    </source>
</reference>
<gene>
    <name evidence="6" type="primary">APP1</name>
</gene>
<evidence type="ECO:0000250" key="1">
    <source>
        <dbReference type="UniProtKB" id="F4JQH3"/>
    </source>
</evidence>
<evidence type="ECO:0000250" key="2">
    <source>
        <dbReference type="UniProtKB" id="O44750"/>
    </source>
</evidence>
<evidence type="ECO:0000250" key="3">
    <source>
        <dbReference type="UniProtKB" id="Q9NQW7"/>
    </source>
</evidence>
<evidence type="ECO:0000250" key="4">
    <source>
        <dbReference type="UniProtKB" id="Q9VJG0"/>
    </source>
</evidence>
<evidence type="ECO:0000269" key="5">
    <source ref="1"/>
</evidence>
<evidence type="ECO:0000303" key="6">
    <source ref="1"/>
</evidence>
<evidence type="ECO:0000305" key="7"/>
<keyword id="KW-0031">Aminopeptidase</keyword>
<keyword id="KW-1003">Cell membrane</keyword>
<keyword id="KW-0963">Cytoplasm</keyword>
<keyword id="KW-0256">Endoplasmic reticulum</keyword>
<keyword id="KW-0378">Hydrolase</keyword>
<keyword id="KW-0464">Manganese</keyword>
<keyword id="KW-0472">Membrane</keyword>
<keyword id="KW-0479">Metal-binding</keyword>
<keyword id="KW-0482">Metalloprotease</keyword>
<keyword id="KW-0492">Microsome</keyword>
<keyword id="KW-0536">Nodulation</keyword>
<keyword id="KW-0539">Nucleus</keyword>
<keyword id="KW-0645">Protease</keyword>
<keyword id="KW-0862">Zinc</keyword>
<sequence>MENTLSALRSLMASHSPPLDALVVPSEDYHQSEYVSARDKRREFVSGFSGSAGLALITKDVALLWTDGRYFLQAEQQLSDEWKLMRIGEDPAVDTWMADNLLKEASIGVDPWCISIDTAQRWERSFAEKQQKLVQTTKNLVDEVWADRPPAEINAVVVQPLKFAGRSVADKLKDLRKKLVQEQARGIIFTSLDEVAWLYNIRGNDVAYCPVVHAFAIVTSNSAFLYVDKRKVSAEVKSHLEENGIEIREYTAVSFDVALLATDELDTTSTAKDTLAEITKQAEKFVSETNKSVNGKHQAKENSNNLIWADPGSCCYAVYSKLNPDTVLLQQSPLALAKALKNPVELEGLKQAHIRDGAAVVQYLVWLDKQMQDIFGASGYFSEGNTVKKEELSQSLKLTEVTVSDKLEGFRASKKHFRGLSFPTISSVGPNGAVIHYSPKAETCAELDPDKIYLFDSGAQYLDGTTDITRTVHFGKPSAHEKACYTAVLKGHIALGNAVFPNGTNGHALDILARIPLWKNGLDYRHGTGHGIGSYLNVHEGPHLISFKPRNVPLQSSMTVTDEPGYYEDGAFGIRLENVLIINEADTKFNFGDKGYLSFEHITWAPYQTKLIDLNLLTPDEINWLNSYHSRCRDILQPHLDDAAENEWLKKATEPVGV</sequence>